<organism>
    <name type="scientific">Clostridium scindens (strain JCM 10418 / VPI 12708)</name>
    <dbReference type="NCBI Taxonomy" id="29347"/>
    <lineage>
        <taxon>Bacteria</taxon>
        <taxon>Bacillati</taxon>
        <taxon>Bacillota</taxon>
        <taxon>Clostridia</taxon>
        <taxon>Lachnospirales</taxon>
        <taxon>Lachnospiraceae</taxon>
    </lineage>
</organism>
<accession>P32371</accession>
<feature type="chain" id="PRO_0000064813" description="Bile acid-inducible operon protein I">
    <location>
        <begin position="1"/>
        <end position="16" status="greater than"/>
    </location>
</feature>
<feature type="non-terminal residue">
    <location>
        <position position="16"/>
    </location>
</feature>
<reference key="1">
    <citation type="journal article" date="1993" name="J. Bacteriol.">
        <title>Characterization of the baiH gene encoding a bile acid-inducible NADH:flavin oxidoreductase from Eubacterium sp. strain VPI 12708.</title>
        <authorList>
            <person name="Franklund C.V."/>
            <person name="Baron S.F."/>
            <person name="Hylemon P.B."/>
        </authorList>
    </citation>
    <scope>NUCLEOTIDE SEQUENCE [GENOMIC DNA]</scope>
</reference>
<protein>
    <recommendedName>
        <fullName>Bile acid-inducible operon protein I</fullName>
    </recommendedName>
</protein>
<sequence>MAVKAISGCDKDQELI</sequence>
<keyword id="KW-0088">Bile acid catabolism</keyword>
<keyword id="KW-0442">Lipid degradation</keyword>
<keyword id="KW-0443">Lipid metabolism</keyword>
<keyword id="KW-0753">Steroid metabolism</keyword>
<comment type="pathway">
    <text>Lipid metabolism; bile acid degradation.</text>
</comment>
<dbReference type="EMBL" id="U57489">
    <property type="protein sequence ID" value="AAC45418.1"/>
    <property type="molecule type" value="Genomic_DNA"/>
</dbReference>
<dbReference type="BioCyc" id="MetaCyc:MONOMER-19701"/>
<dbReference type="UniPathway" id="UPA00279"/>
<dbReference type="GO" id="GO:0030573">
    <property type="term" value="P:bile acid catabolic process"/>
    <property type="evidence" value="ECO:0007669"/>
    <property type="project" value="UniProtKB-UniPathway"/>
</dbReference>
<dbReference type="GO" id="GO:0016042">
    <property type="term" value="P:lipid catabolic process"/>
    <property type="evidence" value="ECO:0007669"/>
    <property type="project" value="UniProtKB-KW"/>
</dbReference>
<gene>
    <name type="primary">baiI</name>
</gene>
<name>BAII_CLOSV</name>
<proteinExistence type="predicted"/>